<evidence type="ECO:0000255" key="1"/>
<evidence type="ECO:0000305" key="2"/>
<proteinExistence type="inferred from homology"/>
<feature type="chain" id="PRO_0000123801" description="Uncharacterized transporter YfdV">
    <location>
        <begin position="1"/>
        <end position="314"/>
    </location>
</feature>
<feature type="transmembrane region" description="Helical" evidence="1">
    <location>
        <begin position="4"/>
        <end position="23"/>
    </location>
</feature>
<feature type="transmembrane region" description="Helical" evidence="1">
    <location>
        <begin position="36"/>
        <end position="53"/>
    </location>
</feature>
<feature type="transmembrane region" description="Helical" evidence="1">
    <location>
        <begin position="68"/>
        <end position="90"/>
    </location>
</feature>
<feature type="transmembrane region" description="Helical" evidence="1">
    <location>
        <begin position="97"/>
        <end position="116"/>
    </location>
</feature>
<feature type="transmembrane region" description="Helical" evidence="1">
    <location>
        <begin position="131"/>
        <end position="153"/>
    </location>
</feature>
<feature type="transmembrane region" description="Helical" evidence="1">
    <location>
        <begin position="174"/>
        <end position="196"/>
    </location>
</feature>
<feature type="transmembrane region" description="Helical" evidence="1">
    <location>
        <begin position="200"/>
        <end position="222"/>
    </location>
</feature>
<feature type="transmembrane region" description="Helical" evidence="1">
    <location>
        <begin position="229"/>
        <end position="251"/>
    </location>
</feature>
<feature type="transmembrane region" description="Helical" evidence="1">
    <location>
        <begin position="261"/>
        <end position="283"/>
    </location>
</feature>
<feature type="transmembrane region" description="Helical" evidence="1">
    <location>
        <begin position="290"/>
        <end position="309"/>
    </location>
</feature>
<protein>
    <recommendedName>
        <fullName>Uncharacterized transporter YfdV</fullName>
    </recommendedName>
</protein>
<name>YFDV_ECO57</name>
<reference key="1">
    <citation type="journal article" date="2001" name="Nature">
        <title>Genome sequence of enterohaemorrhagic Escherichia coli O157:H7.</title>
        <authorList>
            <person name="Perna N.T."/>
            <person name="Plunkett G. III"/>
            <person name="Burland V."/>
            <person name="Mau B."/>
            <person name="Glasner J.D."/>
            <person name="Rose D.J."/>
            <person name="Mayhew G.F."/>
            <person name="Evans P.S."/>
            <person name="Gregor J."/>
            <person name="Kirkpatrick H.A."/>
            <person name="Posfai G."/>
            <person name="Hackett J."/>
            <person name="Klink S."/>
            <person name="Boutin A."/>
            <person name="Shao Y."/>
            <person name="Miller L."/>
            <person name="Grotbeck E.J."/>
            <person name="Davis N.W."/>
            <person name="Lim A."/>
            <person name="Dimalanta E.T."/>
            <person name="Potamousis K."/>
            <person name="Apodaca J."/>
            <person name="Anantharaman T.S."/>
            <person name="Lin J."/>
            <person name="Yen G."/>
            <person name="Schwartz D.C."/>
            <person name="Welch R.A."/>
            <person name="Blattner F.R."/>
        </authorList>
    </citation>
    <scope>NUCLEOTIDE SEQUENCE [LARGE SCALE GENOMIC DNA]</scope>
    <source>
        <strain>O157:H7 / EDL933 / ATCC 700927 / EHEC</strain>
    </source>
</reference>
<reference key="2">
    <citation type="journal article" date="2001" name="DNA Res.">
        <title>Complete genome sequence of enterohemorrhagic Escherichia coli O157:H7 and genomic comparison with a laboratory strain K-12.</title>
        <authorList>
            <person name="Hayashi T."/>
            <person name="Makino K."/>
            <person name="Ohnishi M."/>
            <person name="Kurokawa K."/>
            <person name="Ishii K."/>
            <person name="Yokoyama K."/>
            <person name="Han C.-G."/>
            <person name="Ohtsubo E."/>
            <person name="Nakayama K."/>
            <person name="Murata T."/>
            <person name="Tanaka M."/>
            <person name="Tobe T."/>
            <person name="Iida T."/>
            <person name="Takami H."/>
            <person name="Honda T."/>
            <person name="Sasakawa C."/>
            <person name="Ogasawara N."/>
            <person name="Yasunaga T."/>
            <person name="Kuhara S."/>
            <person name="Shiba T."/>
            <person name="Hattori M."/>
            <person name="Shinagawa H."/>
        </authorList>
    </citation>
    <scope>NUCLEOTIDE SEQUENCE [LARGE SCALE GENOMIC DNA]</scope>
    <source>
        <strain>O157:H7 / Sakai / RIMD 0509952 / EHEC</strain>
    </source>
</reference>
<gene>
    <name type="primary">yfdV</name>
    <name type="ordered locus">Z3635</name>
    <name type="ordered locus">ECs3252</name>
</gene>
<sequence>MLTFFIGDLLPIIVIMLLGYFSGRRETFSEDQARAFNKLVLNYALPAALFVSITRANREMIFADTRLTLVSLVVIVGCFFFSWFGCYKFFKRTHAEAAVCALIAGSPTIGFLGFAVLDPIYGDSVSTGLVVAIISIIVNAITIPIGLYLLNPSSGADGKKNSNLSALISAAKEPVVWAPVLATILVLVGVKIPAAWDPTFNLIAKANSGVAVFAAGLTLAAHKFEFSAEIAYNTFLKLILMPLALLLVGMACHLNSEHLQMMVLAGALPPAFSGIIIASRFNVYTRTGTASLAVSVLGFVVTAPLWIYVSRLVS</sequence>
<accession>P0AA51</accession>
<accession>P76519</accession>
<accession>P76947</accession>
<accession>P76948</accession>
<keyword id="KW-1003">Cell membrane</keyword>
<keyword id="KW-0472">Membrane</keyword>
<keyword id="KW-1185">Reference proteome</keyword>
<keyword id="KW-0812">Transmembrane</keyword>
<keyword id="KW-1133">Transmembrane helix</keyword>
<keyword id="KW-0813">Transport</keyword>
<dbReference type="EMBL" id="AE005174">
    <property type="protein sequence ID" value="AAG57498.1"/>
    <property type="molecule type" value="Genomic_DNA"/>
</dbReference>
<dbReference type="EMBL" id="BA000007">
    <property type="protein sequence ID" value="BAB36675.1"/>
    <property type="molecule type" value="Genomic_DNA"/>
</dbReference>
<dbReference type="PIR" id="D91035">
    <property type="entry name" value="D91035"/>
</dbReference>
<dbReference type="RefSeq" id="NP_311279.1">
    <property type="nucleotide sequence ID" value="NC_002695.1"/>
</dbReference>
<dbReference type="RefSeq" id="WP_000955028.1">
    <property type="nucleotide sequence ID" value="NZ_VOAI01000001.1"/>
</dbReference>
<dbReference type="SMR" id="P0AA51"/>
<dbReference type="STRING" id="155864.Z3635"/>
<dbReference type="GeneID" id="915647"/>
<dbReference type="GeneID" id="93774757"/>
<dbReference type="KEGG" id="ece:Z3635"/>
<dbReference type="KEGG" id="ecs:ECs_3252"/>
<dbReference type="PATRIC" id="fig|386585.9.peg.3396"/>
<dbReference type="eggNOG" id="COG0679">
    <property type="taxonomic scope" value="Bacteria"/>
</dbReference>
<dbReference type="HOGENOM" id="CLU_056175_0_0_6"/>
<dbReference type="OMA" id="LAMWITY"/>
<dbReference type="Proteomes" id="UP000000558">
    <property type="component" value="Chromosome"/>
</dbReference>
<dbReference type="Proteomes" id="UP000002519">
    <property type="component" value="Chromosome"/>
</dbReference>
<dbReference type="GO" id="GO:0005886">
    <property type="term" value="C:plasma membrane"/>
    <property type="evidence" value="ECO:0007669"/>
    <property type="project" value="UniProtKB-SubCell"/>
</dbReference>
<dbReference type="GO" id="GO:0055085">
    <property type="term" value="P:transmembrane transport"/>
    <property type="evidence" value="ECO:0007669"/>
    <property type="project" value="InterPro"/>
</dbReference>
<dbReference type="FunFam" id="1.20.1530.20:FF:000006">
    <property type="entry name" value="Putative transporter YfdV"/>
    <property type="match status" value="1"/>
</dbReference>
<dbReference type="Gene3D" id="1.20.1530.20">
    <property type="match status" value="1"/>
</dbReference>
<dbReference type="InterPro" id="IPR004776">
    <property type="entry name" value="Mem_transp_PIN-like"/>
</dbReference>
<dbReference type="InterPro" id="IPR038770">
    <property type="entry name" value="Na+/solute_symporter_sf"/>
</dbReference>
<dbReference type="NCBIfam" id="NF007384">
    <property type="entry name" value="PRK09903.1"/>
    <property type="match status" value="1"/>
</dbReference>
<dbReference type="PANTHER" id="PTHR36838">
    <property type="entry name" value="AUXIN EFFLUX CARRIER FAMILY PROTEIN"/>
    <property type="match status" value="1"/>
</dbReference>
<dbReference type="PANTHER" id="PTHR36838:SF1">
    <property type="entry name" value="SLR1864 PROTEIN"/>
    <property type="match status" value="1"/>
</dbReference>
<dbReference type="Pfam" id="PF03547">
    <property type="entry name" value="Mem_trans"/>
    <property type="match status" value="1"/>
</dbReference>
<organism>
    <name type="scientific">Escherichia coli O157:H7</name>
    <dbReference type="NCBI Taxonomy" id="83334"/>
    <lineage>
        <taxon>Bacteria</taxon>
        <taxon>Pseudomonadati</taxon>
        <taxon>Pseudomonadota</taxon>
        <taxon>Gammaproteobacteria</taxon>
        <taxon>Enterobacterales</taxon>
        <taxon>Enterobacteriaceae</taxon>
        <taxon>Escherichia</taxon>
    </lineage>
</organism>
<comment type="subcellular location">
    <subcellularLocation>
        <location evidence="2">Cell membrane</location>
        <topology evidence="2">Multi-pass membrane protein</topology>
    </subcellularLocation>
</comment>
<comment type="similarity">
    <text evidence="2">Belongs to the auxin efflux carrier (TC 2.A.69) family.</text>
</comment>